<reference key="1">
    <citation type="journal article" date="1993" name="J. Bacteriol.">
        <title>A hydroxylase-like gene product contributes to synthesis of a polyketide spore pigment in Streptomyces halstedii.</title>
        <authorList>
            <person name="Blanco G."/>
            <person name="Pereda A."/>
            <person name="Brian P."/>
            <person name="Mendez C."/>
            <person name="Chater K.F."/>
            <person name="Salas J.A."/>
        </authorList>
    </citation>
    <scope>NUCLEOTIDE SEQUENCE [GENOMIC DNA]</scope>
</reference>
<sequence length="213" mass="21857">MEAGRGAPAAVRAVTVCVARGDPAMELTLVVLIIVVGLVFDFTNGFHDAANAIATSISTRALTPRIALGMAAVTNFAGAFLGTEVAKTVGSGIIGAPEDLSGLLLVMCALLGAIGWNVFTWWRGLPTSSSHALIGGLVGAALAASATVHWSGIVDKVLLPMLLSPLVGVALGYTLHAAVLWTFRHAAPRPLTRRFRLAQTVSAAAMGLGHGLQ</sequence>
<comment type="function">
    <text evidence="1">Low-affinity inorganic phosphate transporter.</text>
</comment>
<comment type="catalytic activity">
    <reaction evidence="1">
        <text>phosphate(in) + H(+)(in) = phosphate(out) + H(+)(out)</text>
        <dbReference type="Rhea" id="RHEA:29939"/>
        <dbReference type="ChEBI" id="CHEBI:15378"/>
        <dbReference type="ChEBI" id="CHEBI:43474"/>
    </reaction>
</comment>
<comment type="subcellular location">
    <subcellularLocation>
        <location evidence="3">Cell membrane</location>
        <topology evidence="2">Multi-pass membrane protein</topology>
    </subcellularLocation>
</comment>
<comment type="similarity">
    <text evidence="3">Belongs to the inorganic phosphate transporter (PiT) (TC 2.A.20) family. Pit subfamily.</text>
</comment>
<evidence type="ECO:0000250" key="1">
    <source>
        <dbReference type="UniProtKB" id="P0AFJ7"/>
    </source>
</evidence>
<evidence type="ECO:0000255" key="2"/>
<evidence type="ECO:0000305" key="3"/>
<dbReference type="EMBL" id="L05390">
    <property type="status" value="NOT_ANNOTATED_CDS"/>
    <property type="molecule type" value="Genomic_DNA"/>
</dbReference>
<dbReference type="PIR" id="C49918">
    <property type="entry name" value="C49918"/>
</dbReference>
<dbReference type="SMR" id="P41132"/>
<dbReference type="GO" id="GO:0005886">
    <property type="term" value="C:plasma membrane"/>
    <property type="evidence" value="ECO:0007669"/>
    <property type="project" value="UniProtKB-SubCell"/>
</dbReference>
<dbReference type="GO" id="GO:0005315">
    <property type="term" value="F:phosphate transmembrane transporter activity"/>
    <property type="evidence" value="ECO:0007669"/>
    <property type="project" value="InterPro"/>
</dbReference>
<dbReference type="GO" id="GO:0015293">
    <property type="term" value="F:symporter activity"/>
    <property type="evidence" value="ECO:0007669"/>
    <property type="project" value="UniProtKB-KW"/>
</dbReference>
<dbReference type="GO" id="GO:0035435">
    <property type="term" value="P:phosphate ion transmembrane transport"/>
    <property type="evidence" value="ECO:0007669"/>
    <property type="project" value="TreeGrafter"/>
</dbReference>
<dbReference type="InterPro" id="IPR001204">
    <property type="entry name" value="Phos_transporter"/>
</dbReference>
<dbReference type="PANTHER" id="PTHR11101">
    <property type="entry name" value="PHOSPHATE TRANSPORTER"/>
    <property type="match status" value="1"/>
</dbReference>
<dbReference type="PANTHER" id="PTHR11101:SF80">
    <property type="entry name" value="PHOSPHATE TRANSPORTER"/>
    <property type="match status" value="1"/>
</dbReference>
<dbReference type="Pfam" id="PF01384">
    <property type="entry name" value="PHO4"/>
    <property type="match status" value="1"/>
</dbReference>
<organism>
    <name type="scientific">Streptomyces halstedii</name>
    <dbReference type="NCBI Taxonomy" id="1944"/>
    <lineage>
        <taxon>Bacteria</taxon>
        <taxon>Bacillati</taxon>
        <taxon>Actinomycetota</taxon>
        <taxon>Actinomycetes</taxon>
        <taxon>Kitasatosporales</taxon>
        <taxon>Streptomycetaceae</taxon>
        <taxon>Streptomyces</taxon>
    </lineage>
</organism>
<protein>
    <recommendedName>
        <fullName>Probable low-affinity inorganic phosphate transporter</fullName>
    </recommendedName>
</protein>
<name>PIT_STRHA</name>
<feature type="chain" id="PRO_0000080794" description="Probable low-affinity inorganic phosphate transporter">
    <location>
        <begin position="1"/>
        <end position="213" status="greater than"/>
    </location>
</feature>
<feature type="transmembrane region" description="Helical" evidence="2">
    <location>
        <begin position="23"/>
        <end position="43"/>
    </location>
</feature>
<feature type="transmembrane region" description="Helical" evidence="2">
    <location>
        <begin position="66"/>
        <end position="86"/>
    </location>
</feature>
<feature type="transmembrane region" description="Helical" evidence="2">
    <location>
        <begin position="102"/>
        <end position="122"/>
    </location>
</feature>
<feature type="transmembrane region" description="Helical" evidence="2">
    <location>
        <begin position="134"/>
        <end position="154"/>
    </location>
</feature>
<feature type="transmembrane region" description="Helical" evidence="2">
    <location>
        <begin position="161"/>
        <end position="181"/>
    </location>
</feature>
<feature type="non-terminal residue">
    <location>
        <position position="213"/>
    </location>
</feature>
<proteinExistence type="inferred from homology"/>
<keyword id="KW-1003">Cell membrane</keyword>
<keyword id="KW-0472">Membrane</keyword>
<keyword id="KW-0592">Phosphate transport</keyword>
<keyword id="KW-0769">Symport</keyword>
<keyword id="KW-0812">Transmembrane</keyword>
<keyword id="KW-1133">Transmembrane helix</keyword>
<keyword id="KW-0813">Transport</keyword>
<accession>P41132</accession>
<gene>
    <name type="primary">pit</name>
</gene>